<gene>
    <name evidence="1" type="primary">rplX</name>
    <name type="ordered locus">Shew185_0207</name>
</gene>
<reference key="1">
    <citation type="submission" date="2007-07" db="EMBL/GenBank/DDBJ databases">
        <title>Complete sequence of chromosome of Shewanella baltica OS185.</title>
        <authorList>
            <consortium name="US DOE Joint Genome Institute"/>
            <person name="Copeland A."/>
            <person name="Lucas S."/>
            <person name="Lapidus A."/>
            <person name="Barry K."/>
            <person name="Glavina del Rio T."/>
            <person name="Dalin E."/>
            <person name="Tice H."/>
            <person name="Pitluck S."/>
            <person name="Sims D."/>
            <person name="Brettin T."/>
            <person name="Bruce D."/>
            <person name="Detter J.C."/>
            <person name="Han C."/>
            <person name="Schmutz J."/>
            <person name="Larimer F."/>
            <person name="Land M."/>
            <person name="Hauser L."/>
            <person name="Kyrpides N."/>
            <person name="Mikhailova N."/>
            <person name="Brettar I."/>
            <person name="Rodrigues J."/>
            <person name="Konstantinidis K."/>
            <person name="Tiedje J."/>
            <person name="Richardson P."/>
        </authorList>
    </citation>
    <scope>NUCLEOTIDE SEQUENCE [LARGE SCALE GENOMIC DNA]</scope>
    <source>
        <strain>OS185</strain>
    </source>
</reference>
<feature type="chain" id="PRO_1000052304" description="Large ribosomal subunit protein uL24">
    <location>
        <begin position="1"/>
        <end position="104"/>
    </location>
</feature>
<proteinExistence type="inferred from homology"/>
<dbReference type="EMBL" id="CP000753">
    <property type="protein sequence ID" value="ABS06378.1"/>
    <property type="molecule type" value="Genomic_DNA"/>
</dbReference>
<dbReference type="RefSeq" id="WP_006083589.1">
    <property type="nucleotide sequence ID" value="NC_009665.1"/>
</dbReference>
<dbReference type="SMR" id="A6WHT9"/>
<dbReference type="GeneID" id="11770568"/>
<dbReference type="KEGG" id="sbm:Shew185_0207"/>
<dbReference type="HOGENOM" id="CLU_093315_2_2_6"/>
<dbReference type="GO" id="GO:1990904">
    <property type="term" value="C:ribonucleoprotein complex"/>
    <property type="evidence" value="ECO:0007669"/>
    <property type="project" value="UniProtKB-KW"/>
</dbReference>
<dbReference type="GO" id="GO:0005840">
    <property type="term" value="C:ribosome"/>
    <property type="evidence" value="ECO:0007669"/>
    <property type="project" value="UniProtKB-KW"/>
</dbReference>
<dbReference type="GO" id="GO:0019843">
    <property type="term" value="F:rRNA binding"/>
    <property type="evidence" value="ECO:0007669"/>
    <property type="project" value="UniProtKB-UniRule"/>
</dbReference>
<dbReference type="GO" id="GO:0003735">
    <property type="term" value="F:structural constituent of ribosome"/>
    <property type="evidence" value="ECO:0007669"/>
    <property type="project" value="InterPro"/>
</dbReference>
<dbReference type="GO" id="GO:0006412">
    <property type="term" value="P:translation"/>
    <property type="evidence" value="ECO:0007669"/>
    <property type="project" value="UniProtKB-UniRule"/>
</dbReference>
<dbReference type="CDD" id="cd06089">
    <property type="entry name" value="KOW_RPL26"/>
    <property type="match status" value="1"/>
</dbReference>
<dbReference type="FunFam" id="2.30.30.30:FF:000004">
    <property type="entry name" value="50S ribosomal protein L24"/>
    <property type="match status" value="1"/>
</dbReference>
<dbReference type="Gene3D" id="2.30.30.30">
    <property type="match status" value="1"/>
</dbReference>
<dbReference type="HAMAP" id="MF_01326_B">
    <property type="entry name" value="Ribosomal_uL24_B"/>
    <property type="match status" value="1"/>
</dbReference>
<dbReference type="InterPro" id="IPR005824">
    <property type="entry name" value="KOW"/>
</dbReference>
<dbReference type="InterPro" id="IPR014722">
    <property type="entry name" value="Rib_uL2_dom2"/>
</dbReference>
<dbReference type="InterPro" id="IPR003256">
    <property type="entry name" value="Ribosomal_uL24"/>
</dbReference>
<dbReference type="InterPro" id="IPR005825">
    <property type="entry name" value="Ribosomal_uL24_CS"/>
</dbReference>
<dbReference type="InterPro" id="IPR041988">
    <property type="entry name" value="Ribosomal_uL24_KOW"/>
</dbReference>
<dbReference type="InterPro" id="IPR008991">
    <property type="entry name" value="Translation_prot_SH3-like_sf"/>
</dbReference>
<dbReference type="NCBIfam" id="TIGR01079">
    <property type="entry name" value="rplX_bact"/>
    <property type="match status" value="1"/>
</dbReference>
<dbReference type="PANTHER" id="PTHR12903">
    <property type="entry name" value="MITOCHONDRIAL RIBOSOMAL PROTEIN L24"/>
    <property type="match status" value="1"/>
</dbReference>
<dbReference type="Pfam" id="PF00467">
    <property type="entry name" value="KOW"/>
    <property type="match status" value="1"/>
</dbReference>
<dbReference type="Pfam" id="PF17136">
    <property type="entry name" value="ribosomal_L24"/>
    <property type="match status" value="1"/>
</dbReference>
<dbReference type="SMART" id="SM00739">
    <property type="entry name" value="KOW"/>
    <property type="match status" value="1"/>
</dbReference>
<dbReference type="SUPFAM" id="SSF50104">
    <property type="entry name" value="Translation proteins SH3-like domain"/>
    <property type="match status" value="1"/>
</dbReference>
<dbReference type="PROSITE" id="PS01108">
    <property type="entry name" value="RIBOSOMAL_L24"/>
    <property type="match status" value="1"/>
</dbReference>
<organism>
    <name type="scientific">Shewanella baltica (strain OS185)</name>
    <dbReference type="NCBI Taxonomy" id="402882"/>
    <lineage>
        <taxon>Bacteria</taxon>
        <taxon>Pseudomonadati</taxon>
        <taxon>Pseudomonadota</taxon>
        <taxon>Gammaproteobacteria</taxon>
        <taxon>Alteromonadales</taxon>
        <taxon>Shewanellaceae</taxon>
        <taxon>Shewanella</taxon>
    </lineage>
</organism>
<accession>A6WHT9</accession>
<keyword id="KW-0687">Ribonucleoprotein</keyword>
<keyword id="KW-0689">Ribosomal protein</keyword>
<keyword id="KW-0694">RNA-binding</keyword>
<keyword id="KW-0699">rRNA-binding</keyword>
<protein>
    <recommendedName>
        <fullName evidence="1">Large ribosomal subunit protein uL24</fullName>
    </recommendedName>
    <alternativeName>
        <fullName evidence="2">50S ribosomal protein L24</fullName>
    </alternativeName>
</protein>
<name>RL24_SHEB8</name>
<comment type="function">
    <text evidence="1">One of two assembly initiator proteins, it binds directly to the 5'-end of the 23S rRNA, where it nucleates assembly of the 50S subunit.</text>
</comment>
<comment type="function">
    <text evidence="1">One of the proteins that surrounds the polypeptide exit tunnel on the outside of the subunit.</text>
</comment>
<comment type="subunit">
    <text evidence="1">Part of the 50S ribosomal subunit.</text>
</comment>
<comment type="similarity">
    <text evidence="1">Belongs to the universal ribosomal protein uL24 family.</text>
</comment>
<evidence type="ECO:0000255" key="1">
    <source>
        <dbReference type="HAMAP-Rule" id="MF_01326"/>
    </source>
</evidence>
<evidence type="ECO:0000305" key="2"/>
<sequence>MAAKIRREDEVIVLAGKDKGKRAKVSQVLPTGKLIVEGINLVKKHQKPNPQLGVAGGIVEKEAPIQASNVAIFNSATGKADRVGFRFEDGKKVRFFKSNSELVK</sequence>